<sequence length="128" mass="14796">MARIVGVELPGNKKCFVALTYLYGVGRTRAFEILKNTGINPDKRVKDLTDEEVSKITKFIQDHYKVEGELRTDINRNIKRLIDIGCYRGFRHKLGLPVRGQRTRSNARTRKGPRPSRIKTKKKKEQTV</sequence>
<protein>
    <recommendedName>
        <fullName evidence="1">Small ribosomal subunit protein uS13</fullName>
    </recommendedName>
    <alternativeName>
        <fullName evidence="3">30S ribosomal protein S13</fullName>
    </alternativeName>
</protein>
<gene>
    <name evidence="1" type="primary">rpsM</name>
    <name type="ordered locus">Tlet_0604</name>
</gene>
<name>RS13_PSELT</name>
<reference key="1">
    <citation type="submission" date="2007-08" db="EMBL/GenBank/DDBJ databases">
        <title>Complete sequence of Thermotoga lettingae TMO.</title>
        <authorList>
            <consortium name="US DOE Joint Genome Institute"/>
            <person name="Copeland A."/>
            <person name="Lucas S."/>
            <person name="Lapidus A."/>
            <person name="Barry K."/>
            <person name="Glavina del Rio T."/>
            <person name="Dalin E."/>
            <person name="Tice H."/>
            <person name="Pitluck S."/>
            <person name="Foster B."/>
            <person name="Bruce D."/>
            <person name="Schmutz J."/>
            <person name="Larimer F."/>
            <person name="Land M."/>
            <person name="Hauser L."/>
            <person name="Kyrpides N."/>
            <person name="Mikhailova N."/>
            <person name="Nelson K."/>
            <person name="Gogarten J.P."/>
            <person name="Noll K."/>
            <person name="Richardson P."/>
        </authorList>
    </citation>
    <scope>NUCLEOTIDE SEQUENCE [LARGE SCALE GENOMIC DNA]</scope>
    <source>
        <strain>ATCC BAA-301 / DSM 14385 / NBRC 107922 / TMO</strain>
    </source>
</reference>
<proteinExistence type="inferred from homology"/>
<dbReference type="EMBL" id="CP000812">
    <property type="protein sequence ID" value="ABV33170.1"/>
    <property type="molecule type" value="Genomic_DNA"/>
</dbReference>
<dbReference type="RefSeq" id="WP_012002651.1">
    <property type="nucleotide sequence ID" value="NZ_BSDV01000001.1"/>
</dbReference>
<dbReference type="SMR" id="A8F4T6"/>
<dbReference type="STRING" id="416591.Tlet_0604"/>
<dbReference type="KEGG" id="tle:Tlet_0604"/>
<dbReference type="eggNOG" id="COG0099">
    <property type="taxonomic scope" value="Bacteria"/>
</dbReference>
<dbReference type="HOGENOM" id="CLU_103849_1_2_0"/>
<dbReference type="OrthoDB" id="9803610at2"/>
<dbReference type="Proteomes" id="UP000002016">
    <property type="component" value="Chromosome"/>
</dbReference>
<dbReference type="GO" id="GO:0005829">
    <property type="term" value="C:cytosol"/>
    <property type="evidence" value="ECO:0007669"/>
    <property type="project" value="TreeGrafter"/>
</dbReference>
<dbReference type="GO" id="GO:0015935">
    <property type="term" value="C:small ribosomal subunit"/>
    <property type="evidence" value="ECO:0007669"/>
    <property type="project" value="TreeGrafter"/>
</dbReference>
<dbReference type="GO" id="GO:0019843">
    <property type="term" value="F:rRNA binding"/>
    <property type="evidence" value="ECO:0007669"/>
    <property type="project" value="UniProtKB-UniRule"/>
</dbReference>
<dbReference type="GO" id="GO:0003735">
    <property type="term" value="F:structural constituent of ribosome"/>
    <property type="evidence" value="ECO:0007669"/>
    <property type="project" value="InterPro"/>
</dbReference>
<dbReference type="GO" id="GO:0000049">
    <property type="term" value="F:tRNA binding"/>
    <property type="evidence" value="ECO:0007669"/>
    <property type="project" value="UniProtKB-UniRule"/>
</dbReference>
<dbReference type="GO" id="GO:0006412">
    <property type="term" value="P:translation"/>
    <property type="evidence" value="ECO:0007669"/>
    <property type="project" value="UniProtKB-UniRule"/>
</dbReference>
<dbReference type="FunFam" id="1.10.8.50:FF:000001">
    <property type="entry name" value="30S ribosomal protein S13"/>
    <property type="match status" value="1"/>
</dbReference>
<dbReference type="FunFam" id="4.10.910.10:FF:000001">
    <property type="entry name" value="30S ribosomal protein S13"/>
    <property type="match status" value="1"/>
</dbReference>
<dbReference type="Gene3D" id="1.10.8.50">
    <property type="match status" value="1"/>
</dbReference>
<dbReference type="Gene3D" id="4.10.910.10">
    <property type="entry name" value="30s ribosomal protein s13, domain 2"/>
    <property type="match status" value="1"/>
</dbReference>
<dbReference type="HAMAP" id="MF_01315">
    <property type="entry name" value="Ribosomal_uS13"/>
    <property type="match status" value="1"/>
</dbReference>
<dbReference type="InterPro" id="IPR027437">
    <property type="entry name" value="Rbsml_uS13_C"/>
</dbReference>
<dbReference type="InterPro" id="IPR001892">
    <property type="entry name" value="Ribosomal_uS13"/>
</dbReference>
<dbReference type="InterPro" id="IPR010979">
    <property type="entry name" value="Ribosomal_uS13-like_H2TH"/>
</dbReference>
<dbReference type="InterPro" id="IPR019980">
    <property type="entry name" value="Ribosomal_uS13_bac-type"/>
</dbReference>
<dbReference type="InterPro" id="IPR018269">
    <property type="entry name" value="Ribosomal_uS13_CS"/>
</dbReference>
<dbReference type="NCBIfam" id="TIGR03631">
    <property type="entry name" value="uS13_bact"/>
    <property type="match status" value="1"/>
</dbReference>
<dbReference type="PANTHER" id="PTHR10871">
    <property type="entry name" value="30S RIBOSOMAL PROTEIN S13/40S RIBOSOMAL PROTEIN S18"/>
    <property type="match status" value="1"/>
</dbReference>
<dbReference type="PANTHER" id="PTHR10871:SF1">
    <property type="entry name" value="SMALL RIBOSOMAL SUBUNIT PROTEIN US13M"/>
    <property type="match status" value="1"/>
</dbReference>
<dbReference type="Pfam" id="PF00416">
    <property type="entry name" value="Ribosomal_S13"/>
    <property type="match status" value="1"/>
</dbReference>
<dbReference type="PIRSF" id="PIRSF002134">
    <property type="entry name" value="Ribosomal_S13"/>
    <property type="match status" value="1"/>
</dbReference>
<dbReference type="SUPFAM" id="SSF46946">
    <property type="entry name" value="S13-like H2TH domain"/>
    <property type="match status" value="1"/>
</dbReference>
<dbReference type="PROSITE" id="PS00646">
    <property type="entry name" value="RIBOSOMAL_S13_1"/>
    <property type="match status" value="1"/>
</dbReference>
<dbReference type="PROSITE" id="PS50159">
    <property type="entry name" value="RIBOSOMAL_S13_2"/>
    <property type="match status" value="1"/>
</dbReference>
<feature type="chain" id="PRO_1000067521" description="Small ribosomal subunit protein uS13">
    <location>
        <begin position="1"/>
        <end position="128"/>
    </location>
</feature>
<feature type="region of interest" description="Disordered" evidence="2">
    <location>
        <begin position="97"/>
        <end position="128"/>
    </location>
</feature>
<feature type="compositionally biased region" description="Basic residues" evidence="2">
    <location>
        <begin position="101"/>
        <end position="128"/>
    </location>
</feature>
<evidence type="ECO:0000255" key="1">
    <source>
        <dbReference type="HAMAP-Rule" id="MF_01315"/>
    </source>
</evidence>
<evidence type="ECO:0000256" key="2">
    <source>
        <dbReference type="SAM" id="MobiDB-lite"/>
    </source>
</evidence>
<evidence type="ECO:0000305" key="3"/>
<accession>A8F4T6</accession>
<comment type="function">
    <text evidence="1">Located at the top of the head of the 30S subunit, it contacts several helices of the 16S rRNA. In the 70S ribosome it contacts the 23S rRNA (bridge B1a) and protein L5 of the 50S subunit (bridge B1b), connecting the 2 subunits; these bridges are implicated in subunit movement. Contacts the tRNAs in the A and P-sites.</text>
</comment>
<comment type="subunit">
    <text evidence="1">Part of the 30S ribosomal subunit. Forms a loose heterodimer with protein S19. Forms two bridges to the 50S subunit in the 70S ribosome.</text>
</comment>
<comment type="similarity">
    <text evidence="1">Belongs to the universal ribosomal protein uS13 family.</text>
</comment>
<organism>
    <name type="scientific">Pseudothermotoga lettingae (strain ATCC BAA-301 / DSM 14385 / NBRC 107922 / TMO)</name>
    <name type="common">Thermotoga lettingae</name>
    <dbReference type="NCBI Taxonomy" id="416591"/>
    <lineage>
        <taxon>Bacteria</taxon>
        <taxon>Thermotogati</taxon>
        <taxon>Thermotogota</taxon>
        <taxon>Thermotogae</taxon>
        <taxon>Thermotogales</taxon>
        <taxon>Thermotogaceae</taxon>
        <taxon>Pseudothermotoga</taxon>
    </lineage>
</organism>
<keyword id="KW-1185">Reference proteome</keyword>
<keyword id="KW-0687">Ribonucleoprotein</keyword>
<keyword id="KW-0689">Ribosomal protein</keyword>
<keyword id="KW-0694">RNA-binding</keyword>
<keyword id="KW-0699">rRNA-binding</keyword>
<keyword id="KW-0820">tRNA-binding</keyword>